<protein>
    <recommendedName>
        <fullName evidence="1">Bacteriohemerythrin</fullName>
    </recommendedName>
</protein>
<organism>
    <name type="scientific">Clostridium acetobutylicum (strain ATCC 824 / DSM 792 / JCM 1419 / IAM 19013 / LMG 5710 / NBRC 13948 / NRRL B-527 / VKM B-1787 / 2291 / W)</name>
    <dbReference type="NCBI Taxonomy" id="272562"/>
    <lineage>
        <taxon>Bacteria</taxon>
        <taxon>Bacillati</taxon>
        <taxon>Bacillota</taxon>
        <taxon>Clostridia</taxon>
        <taxon>Eubacteriales</taxon>
        <taxon>Clostridiaceae</taxon>
        <taxon>Clostridium</taxon>
    </lineage>
</organism>
<dbReference type="EMBL" id="AE001437">
    <property type="protein sequence ID" value="AAK78055.1"/>
    <property type="molecule type" value="Genomic_DNA"/>
</dbReference>
<dbReference type="PIR" id="D96908">
    <property type="entry name" value="D96908"/>
</dbReference>
<dbReference type="RefSeq" id="NP_346715.1">
    <property type="nucleotide sequence ID" value="NC_003030.1"/>
</dbReference>
<dbReference type="RefSeq" id="WP_010963397.1">
    <property type="nucleotide sequence ID" value="NC_003030.1"/>
</dbReference>
<dbReference type="SMR" id="Q97MX1"/>
<dbReference type="STRING" id="272562.CA_C0069"/>
<dbReference type="KEGG" id="cac:CA_C0069"/>
<dbReference type="PATRIC" id="fig|272562.8.peg.250"/>
<dbReference type="eggNOG" id="COG2703">
    <property type="taxonomic scope" value="Bacteria"/>
</dbReference>
<dbReference type="HOGENOM" id="CLU_086902_2_0_9"/>
<dbReference type="OrthoDB" id="9797092at2"/>
<dbReference type="Proteomes" id="UP000000814">
    <property type="component" value="Chromosome"/>
</dbReference>
<dbReference type="GO" id="GO:0005506">
    <property type="term" value="F:iron ion binding"/>
    <property type="evidence" value="ECO:0007669"/>
    <property type="project" value="UniProtKB-UniRule"/>
</dbReference>
<dbReference type="GO" id="GO:0005344">
    <property type="term" value="F:oxygen carrier activity"/>
    <property type="evidence" value="ECO:0007669"/>
    <property type="project" value="UniProtKB-UniRule"/>
</dbReference>
<dbReference type="CDD" id="cd12107">
    <property type="entry name" value="Hemerythrin"/>
    <property type="match status" value="1"/>
</dbReference>
<dbReference type="Gene3D" id="1.20.120.50">
    <property type="entry name" value="Hemerythrin-like"/>
    <property type="match status" value="1"/>
</dbReference>
<dbReference type="HAMAP" id="MF_00556">
    <property type="entry name" value="Hemerythrin"/>
    <property type="match status" value="1"/>
</dbReference>
<dbReference type="InterPro" id="IPR023504">
    <property type="entry name" value="Bacteriohemerythrin-like"/>
</dbReference>
<dbReference type="InterPro" id="IPR016131">
    <property type="entry name" value="Haemerythrin_Fe_BS"/>
</dbReference>
<dbReference type="InterPro" id="IPR050669">
    <property type="entry name" value="Hemerythrin"/>
</dbReference>
<dbReference type="InterPro" id="IPR012312">
    <property type="entry name" value="Hemerythrin-like"/>
</dbReference>
<dbReference type="InterPro" id="IPR035938">
    <property type="entry name" value="Hemerythrin-like_sf"/>
</dbReference>
<dbReference type="InterPro" id="IPR012827">
    <property type="entry name" value="Hemerythrin_metal-bd"/>
</dbReference>
<dbReference type="NCBIfam" id="NF033749">
    <property type="entry name" value="bact_hemeryth"/>
    <property type="match status" value="1"/>
</dbReference>
<dbReference type="NCBIfam" id="TIGR02481">
    <property type="entry name" value="hemeryth_dom"/>
    <property type="match status" value="1"/>
</dbReference>
<dbReference type="PANTHER" id="PTHR37164">
    <property type="entry name" value="BACTERIOHEMERYTHRIN"/>
    <property type="match status" value="1"/>
</dbReference>
<dbReference type="PANTHER" id="PTHR37164:SF1">
    <property type="entry name" value="BACTERIOHEMERYTHRIN"/>
    <property type="match status" value="1"/>
</dbReference>
<dbReference type="Pfam" id="PF01814">
    <property type="entry name" value="Hemerythrin"/>
    <property type="match status" value="1"/>
</dbReference>
<dbReference type="SUPFAM" id="SSF47188">
    <property type="entry name" value="Hemerythrin-like"/>
    <property type="match status" value="1"/>
</dbReference>
<dbReference type="PROSITE" id="PS00550">
    <property type="entry name" value="HEMERYTHRINS"/>
    <property type="match status" value="1"/>
</dbReference>
<evidence type="ECO:0000255" key="1">
    <source>
        <dbReference type="HAMAP-Rule" id="MF_00556"/>
    </source>
</evidence>
<gene>
    <name type="ordered locus">CA_C0069</name>
</gene>
<accession>Q97MX1</accession>
<name>HEMTB_CLOAB</name>
<comment type="function">
    <text evidence="1">Oxygen-binding protein. May be involved in a storage mechanism or for delivery to oxygen-requiring enzymes. The oxygen-binding site contains two iron atoms.</text>
</comment>
<comment type="subunit">
    <text evidence="1">Monomer.</text>
</comment>
<comment type="similarity">
    <text evidence="1">Belongs to the hemerythrin family.</text>
</comment>
<feature type="chain" id="PRO_0000191847" description="Bacteriohemerythrin">
    <location>
        <begin position="1"/>
        <end position="129"/>
    </location>
</feature>
<feature type="binding site" evidence="1">
    <location>
        <position position="19"/>
    </location>
    <ligand>
        <name>Fe cation</name>
        <dbReference type="ChEBI" id="CHEBI:24875"/>
        <label>1</label>
    </ligand>
</feature>
<feature type="binding site" evidence="1">
    <location>
        <position position="59"/>
    </location>
    <ligand>
        <name>Fe cation</name>
        <dbReference type="ChEBI" id="CHEBI:24875"/>
        <label>1</label>
    </ligand>
</feature>
<feature type="binding site" evidence="1">
    <location>
        <position position="63"/>
    </location>
    <ligand>
        <name>Fe cation</name>
        <dbReference type="ChEBI" id="CHEBI:24875"/>
        <label>1</label>
    </ligand>
</feature>
<feature type="binding site" evidence="1">
    <location>
        <position position="63"/>
    </location>
    <ligand>
        <name>Fe cation</name>
        <dbReference type="ChEBI" id="CHEBI:24875"/>
        <label>2</label>
    </ligand>
</feature>
<feature type="binding site" evidence="1">
    <location>
        <position position="78"/>
    </location>
    <ligand>
        <name>Fe cation</name>
        <dbReference type="ChEBI" id="CHEBI:24875"/>
        <label>2</label>
    </ligand>
</feature>
<feature type="binding site" evidence="1">
    <location>
        <position position="82"/>
    </location>
    <ligand>
        <name>Fe cation</name>
        <dbReference type="ChEBI" id="CHEBI:24875"/>
        <label>2</label>
    </ligand>
</feature>
<feature type="binding site" evidence="1">
    <location>
        <position position="119"/>
    </location>
    <ligand>
        <name>Fe cation</name>
        <dbReference type="ChEBI" id="CHEBI:24875"/>
        <label>2</label>
    </ligand>
</feature>
<feature type="binding site" evidence="1">
    <location>
        <position position="124"/>
    </location>
    <ligand>
        <name>Fe cation</name>
        <dbReference type="ChEBI" id="CHEBI:24875"/>
        <label>1</label>
    </ligand>
</feature>
<feature type="binding site" evidence="1">
    <location>
        <position position="124"/>
    </location>
    <ligand>
        <name>Fe cation</name>
        <dbReference type="ChEBI" id="CHEBI:24875"/>
        <label>2</label>
    </ligand>
</feature>
<proteinExistence type="inferred from homology"/>
<reference key="1">
    <citation type="journal article" date="2001" name="J. Bacteriol.">
        <title>Genome sequence and comparative analysis of the solvent-producing bacterium Clostridium acetobutylicum.</title>
        <authorList>
            <person name="Noelling J."/>
            <person name="Breton G."/>
            <person name="Omelchenko M.V."/>
            <person name="Makarova K.S."/>
            <person name="Zeng Q."/>
            <person name="Gibson R."/>
            <person name="Lee H.M."/>
            <person name="Dubois J."/>
            <person name="Qiu D."/>
            <person name="Hitti J."/>
            <person name="Wolf Y.I."/>
            <person name="Tatusov R.L."/>
            <person name="Sabathe F."/>
            <person name="Doucette-Stamm L.A."/>
            <person name="Soucaille P."/>
            <person name="Daly M.J."/>
            <person name="Bennett G.N."/>
            <person name="Koonin E.V."/>
            <person name="Smith D.R."/>
        </authorList>
    </citation>
    <scope>NUCLEOTIDE SEQUENCE [LARGE SCALE GENOMIC DNA]</scope>
    <source>
        <strain>ATCC 824 / DSM 792 / JCM 1419 / IAM 19013 / LMG 5710 / NBRC 13948 / NRRL B-527 / VKM B-1787 / 2291 / W</strain>
    </source>
</reference>
<keyword id="KW-0408">Iron</keyword>
<keyword id="KW-0479">Metal-binding</keyword>
<keyword id="KW-0561">Oxygen transport</keyword>
<keyword id="KW-1185">Reference proteome</keyword>
<keyword id="KW-0813">Transport</keyword>
<sequence length="129" mass="15924">MFVWKDEFELGIDKIDNEHRKLFEIANKGYELLKNEFYVDKYDKIMDIIVELKEYAEFHFSEEEDYLASIGYKKLFTHKLEHDSFIKKVESFNIKEIDYDQDKYIQEMLDFVVTWIKEHILEKDREYID</sequence>